<dbReference type="EC" id="3.1.-.-" evidence="1"/>
<dbReference type="EMBL" id="CP000407">
    <property type="protein sequence ID" value="ABP89388.1"/>
    <property type="molecule type" value="Genomic_DNA"/>
</dbReference>
<dbReference type="SMR" id="A4VTE9"/>
<dbReference type="STRING" id="391295.SSU05_0421"/>
<dbReference type="KEGG" id="ssu:SSU05_0421"/>
<dbReference type="eggNOG" id="COG1418">
    <property type="taxonomic scope" value="Bacteria"/>
</dbReference>
<dbReference type="HOGENOM" id="CLU_028328_1_0_9"/>
<dbReference type="GO" id="GO:0005886">
    <property type="term" value="C:plasma membrane"/>
    <property type="evidence" value="ECO:0007669"/>
    <property type="project" value="UniProtKB-SubCell"/>
</dbReference>
<dbReference type="GO" id="GO:0003723">
    <property type="term" value="F:RNA binding"/>
    <property type="evidence" value="ECO:0007669"/>
    <property type="project" value="UniProtKB-UniRule"/>
</dbReference>
<dbReference type="GO" id="GO:0004521">
    <property type="term" value="F:RNA endonuclease activity"/>
    <property type="evidence" value="ECO:0007669"/>
    <property type="project" value="UniProtKB-UniRule"/>
</dbReference>
<dbReference type="GO" id="GO:0006402">
    <property type="term" value="P:mRNA catabolic process"/>
    <property type="evidence" value="ECO:0007669"/>
    <property type="project" value="UniProtKB-UniRule"/>
</dbReference>
<dbReference type="CDD" id="cd00077">
    <property type="entry name" value="HDc"/>
    <property type="match status" value="1"/>
</dbReference>
<dbReference type="CDD" id="cd22431">
    <property type="entry name" value="KH-I_RNaseY"/>
    <property type="match status" value="1"/>
</dbReference>
<dbReference type="FunFam" id="1.10.3210.10:FF:000003">
    <property type="entry name" value="Ribonuclease Y"/>
    <property type="match status" value="1"/>
</dbReference>
<dbReference type="Gene3D" id="1.10.3210.10">
    <property type="entry name" value="Hypothetical protein af1432"/>
    <property type="match status" value="1"/>
</dbReference>
<dbReference type="Gene3D" id="3.30.1370.10">
    <property type="entry name" value="K Homology domain, type 1"/>
    <property type="match status" value="1"/>
</dbReference>
<dbReference type="HAMAP" id="MF_00335">
    <property type="entry name" value="RNase_Y"/>
    <property type="match status" value="1"/>
</dbReference>
<dbReference type="InterPro" id="IPR003607">
    <property type="entry name" value="HD/PDEase_dom"/>
</dbReference>
<dbReference type="InterPro" id="IPR006674">
    <property type="entry name" value="HD_domain"/>
</dbReference>
<dbReference type="InterPro" id="IPR006675">
    <property type="entry name" value="HDIG_dom"/>
</dbReference>
<dbReference type="InterPro" id="IPR004087">
    <property type="entry name" value="KH_dom"/>
</dbReference>
<dbReference type="InterPro" id="IPR004088">
    <property type="entry name" value="KH_dom_type_1"/>
</dbReference>
<dbReference type="InterPro" id="IPR036612">
    <property type="entry name" value="KH_dom_type_1_sf"/>
</dbReference>
<dbReference type="InterPro" id="IPR017705">
    <property type="entry name" value="Ribonuclease_Y"/>
</dbReference>
<dbReference type="InterPro" id="IPR022711">
    <property type="entry name" value="RNase_Y_N"/>
</dbReference>
<dbReference type="NCBIfam" id="TIGR00277">
    <property type="entry name" value="HDIG"/>
    <property type="match status" value="1"/>
</dbReference>
<dbReference type="NCBIfam" id="NF000997">
    <property type="entry name" value="PRK00106.1"/>
    <property type="match status" value="1"/>
</dbReference>
<dbReference type="NCBIfam" id="TIGR03319">
    <property type="entry name" value="RNase_Y"/>
    <property type="match status" value="1"/>
</dbReference>
<dbReference type="PANTHER" id="PTHR12826">
    <property type="entry name" value="RIBONUCLEASE Y"/>
    <property type="match status" value="1"/>
</dbReference>
<dbReference type="PANTHER" id="PTHR12826:SF15">
    <property type="entry name" value="RIBONUCLEASE Y"/>
    <property type="match status" value="1"/>
</dbReference>
<dbReference type="Pfam" id="PF01966">
    <property type="entry name" value="HD"/>
    <property type="match status" value="1"/>
</dbReference>
<dbReference type="Pfam" id="PF00013">
    <property type="entry name" value="KH_1"/>
    <property type="match status" value="1"/>
</dbReference>
<dbReference type="Pfam" id="PF12072">
    <property type="entry name" value="RNase_Y_N"/>
    <property type="match status" value="1"/>
</dbReference>
<dbReference type="SMART" id="SM00471">
    <property type="entry name" value="HDc"/>
    <property type="match status" value="1"/>
</dbReference>
<dbReference type="SMART" id="SM00322">
    <property type="entry name" value="KH"/>
    <property type="match status" value="1"/>
</dbReference>
<dbReference type="SUPFAM" id="SSF54791">
    <property type="entry name" value="Eukaryotic type KH-domain (KH-domain type I)"/>
    <property type="match status" value="1"/>
</dbReference>
<dbReference type="SUPFAM" id="SSF109604">
    <property type="entry name" value="HD-domain/PDEase-like"/>
    <property type="match status" value="1"/>
</dbReference>
<dbReference type="PROSITE" id="PS51831">
    <property type="entry name" value="HD"/>
    <property type="match status" value="1"/>
</dbReference>
<dbReference type="PROSITE" id="PS50084">
    <property type="entry name" value="KH_TYPE_1"/>
    <property type="match status" value="1"/>
</dbReference>
<organism>
    <name type="scientific">Streptococcus suis (strain 05ZYH33)</name>
    <dbReference type="NCBI Taxonomy" id="391295"/>
    <lineage>
        <taxon>Bacteria</taxon>
        <taxon>Bacillati</taxon>
        <taxon>Bacillota</taxon>
        <taxon>Bacilli</taxon>
        <taxon>Lactobacillales</taxon>
        <taxon>Streptococcaceae</taxon>
        <taxon>Streptococcus</taxon>
    </lineage>
</organism>
<evidence type="ECO:0000255" key="1">
    <source>
        <dbReference type="HAMAP-Rule" id="MF_00335"/>
    </source>
</evidence>
<evidence type="ECO:0000255" key="2">
    <source>
        <dbReference type="PROSITE-ProRule" id="PRU01175"/>
    </source>
</evidence>
<evidence type="ECO:0000256" key="3">
    <source>
        <dbReference type="SAM" id="MobiDB-lite"/>
    </source>
</evidence>
<protein>
    <recommendedName>
        <fullName evidence="1">Ribonuclease Y</fullName>
        <shortName evidence="1">RNase Y</shortName>
        <ecNumber evidence="1">3.1.-.-</ecNumber>
    </recommendedName>
</protein>
<gene>
    <name evidence="1" type="primary">rny</name>
    <name type="ordered locus">SSU05_0421</name>
</gene>
<keyword id="KW-1003">Cell membrane</keyword>
<keyword id="KW-0255">Endonuclease</keyword>
<keyword id="KW-0378">Hydrolase</keyword>
<keyword id="KW-0472">Membrane</keyword>
<keyword id="KW-0540">Nuclease</keyword>
<keyword id="KW-0694">RNA-binding</keyword>
<keyword id="KW-0812">Transmembrane</keyword>
<keyword id="KW-1133">Transmembrane helix</keyword>
<feature type="chain" id="PRO_0000344950" description="Ribonuclease Y">
    <location>
        <begin position="1"/>
        <end position="537"/>
    </location>
</feature>
<feature type="transmembrane region" description="Helical" evidence="1">
    <location>
        <begin position="3"/>
        <end position="23"/>
    </location>
</feature>
<feature type="domain" description="KH" evidence="1">
    <location>
        <begin position="227"/>
        <end position="287"/>
    </location>
</feature>
<feature type="domain" description="HD" evidence="2">
    <location>
        <begin position="353"/>
        <end position="446"/>
    </location>
</feature>
<feature type="region of interest" description="Disordered" evidence="3">
    <location>
        <begin position="112"/>
        <end position="136"/>
    </location>
</feature>
<proteinExistence type="inferred from homology"/>
<name>RNY_STRSY</name>
<reference key="1">
    <citation type="journal article" date="2007" name="PLoS ONE">
        <title>A glimpse of streptococcal toxic shock syndrome from comparative genomics of S. suis 2 Chinese isolates.</title>
        <authorList>
            <person name="Chen C."/>
            <person name="Tang J."/>
            <person name="Dong W."/>
            <person name="Wang C."/>
            <person name="Feng Y."/>
            <person name="Wang J."/>
            <person name="Zheng F."/>
            <person name="Pan X."/>
            <person name="Liu D."/>
            <person name="Li M."/>
            <person name="Song Y."/>
            <person name="Zhu X."/>
            <person name="Sun H."/>
            <person name="Feng T."/>
            <person name="Guo Z."/>
            <person name="Ju A."/>
            <person name="Ge J."/>
            <person name="Dong Y."/>
            <person name="Sun W."/>
            <person name="Jiang Y."/>
            <person name="Wang J."/>
            <person name="Yan J."/>
            <person name="Yang H."/>
            <person name="Wang X."/>
            <person name="Gao G.F."/>
            <person name="Yang R."/>
            <person name="Wang J."/>
            <person name="Yu J."/>
        </authorList>
    </citation>
    <scope>NUCLEOTIDE SEQUENCE [LARGE SCALE GENOMIC DNA]</scope>
    <source>
        <strain>05ZYH33</strain>
    </source>
</reference>
<sequence length="537" mass="60539">MNIITVVVTLVSALIGLVLGYFAISLKMKSAKETAELTLLNAEQEASNVRGRAEEQAEVILKTAERDRQTLKKELLLEAKEEARKYREEIAEEFKSERQELKQIESRLTERATSLDRKDDNLTNKEKTLEQKEQSLTDKAKHIDEREQEVVKLEEQKALELERVAALSQEEAKEIILTDTRDKLTHEIATRIKEAEREVKERSDKMAKDLLAQAMQRISGEYVAEQTITSVHLPDDAMKGRIIGREGRNIRTFESLTGIDVIIDDTPEVVVLSGFDPIRREIARMTMETLLQDGRIHPARIEELVEKHRVEMDNRIREYGEAAAYEVGAPNLHPDLIKIMGRLHFRTSYGQNVLRHSIEVAKLAGVLAAELGENVNLARRAGFLHDVGKAIDREVDGSHVEIGTELAKKYKENPIVINAIASHHGDVEATSTIAVIVAAADALSAARPGSRRESMEAYIKRLQDLEEIANSFEGIKQSYAIQAGREIRIIVHPNKVTDDQITILAHDVREKIENNLDYPGNIKITVIRETRATDVAK</sequence>
<comment type="function">
    <text evidence="1">Endoribonuclease that initiates mRNA decay.</text>
</comment>
<comment type="subcellular location">
    <subcellularLocation>
        <location evidence="1">Cell membrane</location>
        <topology evidence="1">Single-pass membrane protein</topology>
    </subcellularLocation>
</comment>
<comment type="similarity">
    <text evidence="1">Belongs to the RNase Y family.</text>
</comment>
<accession>A4VTE9</accession>